<comment type="subcellular location">
    <subcellularLocation>
        <location evidence="1">Cytoplasm</location>
    </subcellularLocation>
    <subcellularLocation>
        <location evidence="1">Nucleus</location>
    </subcellularLocation>
</comment>
<proteinExistence type="predicted"/>
<dbReference type="EMBL" id="CU329671">
    <property type="protein sequence ID" value="CAC34984.2"/>
    <property type="molecule type" value="Genomic_DNA"/>
</dbReference>
<dbReference type="RefSeq" id="NP_595786.2">
    <property type="nucleotide sequence ID" value="NM_001021687.2"/>
</dbReference>
<dbReference type="SMR" id="Q9C0X2"/>
<dbReference type="STRING" id="284812.Q9C0X2"/>
<dbReference type="iPTMnet" id="Q9C0X2"/>
<dbReference type="PaxDb" id="4896-SPBC16E9.19.1"/>
<dbReference type="EnsemblFungi" id="SPBC16E9.19.1">
    <property type="protein sequence ID" value="SPBC16E9.19.1:pep"/>
    <property type="gene ID" value="SPBC16E9.19"/>
</dbReference>
<dbReference type="PomBase" id="SPBC16E9.19"/>
<dbReference type="VEuPathDB" id="FungiDB:SPBC16E9.19"/>
<dbReference type="HOGENOM" id="CLU_1876624_0_0_1"/>
<dbReference type="InParanoid" id="Q9C0X2"/>
<dbReference type="OMA" id="NCLAMKF"/>
<dbReference type="Reactome" id="R-SPO-9907900">
    <property type="pathway name" value="Proteasome assembly"/>
</dbReference>
<dbReference type="PRO" id="PR:Q9C0X2"/>
<dbReference type="Proteomes" id="UP000002485">
    <property type="component" value="Chromosome II"/>
</dbReference>
<dbReference type="GO" id="GO:0005737">
    <property type="term" value="C:cytoplasm"/>
    <property type="evidence" value="ECO:0007005"/>
    <property type="project" value="PomBase"/>
</dbReference>
<dbReference type="GO" id="GO:0005829">
    <property type="term" value="C:cytosol"/>
    <property type="evidence" value="ECO:0007005"/>
    <property type="project" value="PomBase"/>
</dbReference>
<dbReference type="GO" id="GO:0005634">
    <property type="term" value="C:nucleus"/>
    <property type="evidence" value="ECO:0007005"/>
    <property type="project" value="PomBase"/>
</dbReference>
<dbReference type="GO" id="GO:0044183">
    <property type="term" value="F:protein folding chaperone"/>
    <property type="evidence" value="ECO:0000303"/>
    <property type="project" value="PomBase"/>
</dbReference>
<dbReference type="GO" id="GO:0043248">
    <property type="term" value="P:proteasome assembly"/>
    <property type="evidence" value="ECO:0000266"/>
    <property type="project" value="PomBase"/>
</dbReference>
<dbReference type="Gene3D" id="3.30.230.90">
    <property type="match status" value="1"/>
</dbReference>
<dbReference type="InterPro" id="IPR018788">
    <property type="entry name" value="Proteasome_assmbl_chp_3"/>
</dbReference>
<dbReference type="InterPro" id="IPR053720">
    <property type="entry name" value="Psm_Assembly_Chaperone"/>
</dbReference>
<dbReference type="PANTHER" id="PTHR31051">
    <property type="entry name" value="PROTEASOME ASSEMBLY CHAPERONE 3"/>
    <property type="match status" value="1"/>
</dbReference>
<dbReference type="PANTHER" id="PTHR31051:SF1">
    <property type="entry name" value="PROTEASOME ASSEMBLY CHAPERONE 3"/>
    <property type="match status" value="1"/>
</dbReference>
<accession>Q9C0X2</accession>
<organism>
    <name type="scientific">Schizosaccharomyces pombe (strain 972 / ATCC 24843)</name>
    <name type="common">Fission yeast</name>
    <dbReference type="NCBI Taxonomy" id="284812"/>
    <lineage>
        <taxon>Eukaryota</taxon>
        <taxon>Fungi</taxon>
        <taxon>Dikarya</taxon>
        <taxon>Ascomycota</taxon>
        <taxon>Taphrinomycotina</taxon>
        <taxon>Schizosaccharomycetes</taxon>
        <taxon>Schizosaccharomycetales</taxon>
        <taxon>Schizosaccharomycetaceae</taxon>
        <taxon>Schizosaccharomyces</taxon>
    </lineage>
</organism>
<reference key="1">
    <citation type="journal article" date="2002" name="Nature">
        <title>The genome sequence of Schizosaccharomyces pombe.</title>
        <authorList>
            <person name="Wood V."/>
            <person name="Gwilliam R."/>
            <person name="Rajandream M.A."/>
            <person name="Lyne M.H."/>
            <person name="Lyne R."/>
            <person name="Stewart A."/>
            <person name="Sgouros J.G."/>
            <person name="Peat N."/>
            <person name="Hayles J."/>
            <person name="Baker S.G."/>
            <person name="Basham D."/>
            <person name="Bowman S."/>
            <person name="Brooks K."/>
            <person name="Brown D."/>
            <person name="Brown S."/>
            <person name="Chillingworth T."/>
            <person name="Churcher C.M."/>
            <person name="Collins M."/>
            <person name="Connor R."/>
            <person name="Cronin A."/>
            <person name="Davis P."/>
            <person name="Feltwell T."/>
            <person name="Fraser A."/>
            <person name="Gentles S."/>
            <person name="Goble A."/>
            <person name="Hamlin N."/>
            <person name="Harris D.E."/>
            <person name="Hidalgo J."/>
            <person name="Hodgson G."/>
            <person name="Holroyd S."/>
            <person name="Hornsby T."/>
            <person name="Howarth S."/>
            <person name="Huckle E.J."/>
            <person name="Hunt S."/>
            <person name="Jagels K."/>
            <person name="James K.D."/>
            <person name="Jones L."/>
            <person name="Jones M."/>
            <person name="Leather S."/>
            <person name="McDonald S."/>
            <person name="McLean J."/>
            <person name="Mooney P."/>
            <person name="Moule S."/>
            <person name="Mungall K.L."/>
            <person name="Murphy L.D."/>
            <person name="Niblett D."/>
            <person name="Odell C."/>
            <person name="Oliver K."/>
            <person name="O'Neil S."/>
            <person name="Pearson D."/>
            <person name="Quail M.A."/>
            <person name="Rabbinowitsch E."/>
            <person name="Rutherford K.M."/>
            <person name="Rutter S."/>
            <person name="Saunders D."/>
            <person name="Seeger K."/>
            <person name="Sharp S."/>
            <person name="Skelton J."/>
            <person name="Simmonds M.N."/>
            <person name="Squares R."/>
            <person name="Squares S."/>
            <person name="Stevens K."/>
            <person name="Taylor K."/>
            <person name="Taylor R.G."/>
            <person name="Tivey A."/>
            <person name="Walsh S.V."/>
            <person name="Warren T."/>
            <person name="Whitehead S."/>
            <person name="Woodward J.R."/>
            <person name="Volckaert G."/>
            <person name="Aert R."/>
            <person name="Robben J."/>
            <person name="Grymonprez B."/>
            <person name="Weltjens I."/>
            <person name="Vanstreels E."/>
            <person name="Rieger M."/>
            <person name="Schaefer M."/>
            <person name="Mueller-Auer S."/>
            <person name="Gabel C."/>
            <person name="Fuchs M."/>
            <person name="Duesterhoeft A."/>
            <person name="Fritzc C."/>
            <person name="Holzer E."/>
            <person name="Moestl D."/>
            <person name="Hilbert H."/>
            <person name="Borzym K."/>
            <person name="Langer I."/>
            <person name="Beck A."/>
            <person name="Lehrach H."/>
            <person name="Reinhardt R."/>
            <person name="Pohl T.M."/>
            <person name="Eger P."/>
            <person name="Zimmermann W."/>
            <person name="Wedler H."/>
            <person name="Wambutt R."/>
            <person name="Purnelle B."/>
            <person name="Goffeau A."/>
            <person name="Cadieu E."/>
            <person name="Dreano S."/>
            <person name="Gloux S."/>
            <person name="Lelaure V."/>
            <person name="Mottier S."/>
            <person name="Galibert F."/>
            <person name="Aves S.J."/>
            <person name="Xiang Z."/>
            <person name="Hunt C."/>
            <person name="Moore K."/>
            <person name="Hurst S.M."/>
            <person name="Lucas M."/>
            <person name="Rochet M."/>
            <person name="Gaillardin C."/>
            <person name="Tallada V.A."/>
            <person name="Garzon A."/>
            <person name="Thode G."/>
            <person name="Daga R.R."/>
            <person name="Cruzado L."/>
            <person name="Jimenez J."/>
            <person name="Sanchez M."/>
            <person name="del Rey F."/>
            <person name="Benito J."/>
            <person name="Dominguez A."/>
            <person name="Revuelta J.L."/>
            <person name="Moreno S."/>
            <person name="Armstrong J."/>
            <person name="Forsburg S.L."/>
            <person name="Cerutti L."/>
            <person name="Lowe T."/>
            <person name="McCombie W.R."/>
            <person name="Paulsen I."/>
            <person name="Potashkin J."/>
            <person name="Shpakovski G.V."/>
            <person name="Ussery D."/>
            <person name="Barrell B.G."/>
            <person name="Nurse P."/>
        </authorList>
    </citation>
    <scope>NUCLEOTIDE SEQUENCE [LARGE SCALE GENOMIC DNA]</scope>
    <source>
        <strain>972 / ATCC 24843</strain>
    </source>
</reference>
<reference key="2">
    <citation type="journal article" date="2011" name="Science">
        <title>Comparative functional genomics of the fission yeasts.</title>
        <authorList>
            <person name="Rhind N."/>
            <person name="Chen Z."/>
            <person name="Yassour M."/>
            <person name="Thompson D.A."/>
            <person name="Haas B.J."/>
            <person name="Habib N."/>
            <person name="Wapinski I."/>
            <person name="Roy S."/>
            <person name="Lin M.F."/>
            <person name="Heiman D.I."/>
            <person name="Young S.K."/>
            <person name="Furuya K."/>
            <person name="Guo Y."/>
            <person name="Pidoux A."/>
            <person name="Chen H.M."/>
            <person name="Robbertse B."/>
            <person name="Goldberg J.M."/>
            <person name="Aoki K."/>
            <person name="Bayne E.H."/>
            <person name="Berlin A.M."/>
            <person name="Desjardins C.A."/>
            <person name="Dobbs E."/>
            <person name="Dukaj L."/>
            <person name="Fan L."/>
            <person name="FitzGerald M.G."/>
            <person name="French C."/>
            <person name="Gujja S."/>
            <person name="Hansen K."/>
            <person name="Keifenheim D."/>
            <person name="Levin J.Z."/>
            <person name="Mosher R.A."/>
            <person name="Mueller C.A."/>
            <person name="Pfiffner J."/>
            <person name="Priest M."/>
            <person name="Russ C."/>
            <person name="Smialowska A."/>
            <person name="Swoboda P."/>
            <person name="Sykes S.M."/>
            <person name="Vaughn M."/>
            <person name="Vengrova S."/>
            <person name="Yoder R."/>
            <person name="Zeng Q."/>
            <person name="Allshire R."/>
            <person name="Baulcombe D."/>
            <person name="Birren B.W."/>
            <person name="Brown W."/>
            <person name="Ekwall K."/>
            <person name="Kellis M."/>
            <person name="Leatherwood J."/>
            <person name="Levin H."/>
            <person name="Margalit H."/>
            <person name="Martienssen R."/>
            <person name="Nieduszynski C.A."/>
            <person name="Spatafora J.W."/>
            <person name="Friedman N."/>
            <person name="Dalgaard J.Z."/>
            <person name="Baumann P."/>
            <person name="Niki H."/>
            <person name="Regev A."/>
            <person name="Nusbaum C."/>
        </authorList>
    </citation>
    <scope>REVISION OF GENE MODEL</scope>
</reference>
<reference key="3">
    <citation type="journal article" date="2006" name="Nat. Biotechnol.">
        <title>ORFeome cloning and global analysis of protein localization in the fission yeast Schizosaccharomyces pombe.</title>
        <authorList>
            <person name="Matsuyama A."/>
            <person name="Arai R."/>
            <person name="Yashiroda Y."/>
            <person name="Shirai A."/>
            <person name="Kamata A."/>
            <person name="Sekido S."/>
            <person name="Kobayashi Y."/>
            <person name="Hashimoto A."/>
            <person name="Hamamoto M."/>
            <person name="Hiraoka Y."/>
            <person name="Horinouchi S."/>
            <person name="Yoshida M."/>
        </authorList>
    </citation>
    <scope>SUBCELLULAR LOCATION [LARGE SCALE ANALYSIS]</scope>
</reference>
<keyword id="KW-0963">Cytoplasm</keyword>
<keyword id="KW-0539">Nucleus</keyword>
<keyword id="KW-1185">Reference proteome</keyword>
<feature type="chain" id="PRO_0000116507" description="Uncharacterized protein C16E9.19">
    <location>
        <begin position="1"/>
        <end position="143"/>
    </location>
</feature>
<evidence type="ECO:0000269" key="1">
    <source>
    </source>
</evidence>
<name>YB7J_SCHPO</name>
<gene>
    <name type="ORF">SPBC16E9.19</name>
</gene>
<protein>
    <recommendedName>
        <fullName>Uncharacterized protein C16E9.19</fullName>
    </recommendedName>
</protein>
<sequence>MFPKIKQTSKNYNGKEIQAISMRFSNQITILVTISGKIGQMYMMTYEKSVMSPVSITGDMSTLPEIGVRTLLGGGGEDDIKSHWAQITAGQVGSLLARQQMLVRPDVRIPRVCLGLHVPWTDDNEKNGDLTVVILELVKEICF</sequence>